<name>TKNK_HUMAN</name>
<organism>
    <name type="scientific">Homo sapiens</name>
    <name type="common">Human</name>
    <dbReference type="NCBI Taxonomy" id="9606"/>
    <lineage>
        <taxon>Eukaryota</taxon>
        <taxon>Metazoa</taxon>
        <taxon>Chordata</taxon>
        <taxon>Craniata</taxon>
        <taxon>Vertebrata</taxon>
        <taxon>Euteleostomi</taxon>
        <taxon>Mammalia</taxon>
        <taxon>Eutheria</taxon>
        <taxon>Euarchontoglires</taxon>
        <taxon>Primates</taxon>
        <taxon>Haplorrhini</taxon>
        <taxon>Catarrhini</taxon>
        <taxon>Hominidae</taxon>
        <taxon>Homo</taxon>
    </lineage>
</organism>
<dbReference type="EMBL" id="AF186112">
    <property type="protein sequence ID" value="AAF01430.1"/>
    <property type="molecule type" value="mRNA"/>
</dbReference>
<dbReference type="EMBL" id="AF216586">
    <property type="protein sequence ID" value="AAF76980.1"/>
    <property type="molecule type" value="mRNA"/>
</dbReference>
<dbReference type="EMBL" id="AF537113">
    <property type="protein sequence ID" value="AAQ10783.1"/>
    <property type="molecule type" value="mRNA"/>
</dbReference>
<dbReference type="EMBL" id="AF537114">
    <property type="protein sequence ID" value="AAQ10784.1"/>
    <property type="molecule type" value="mRNA"/>
</dbReference>
<dbReference type="EMBL" id="AF537115">
    <property type="protein sequence ID" value="AAQ10785.1"/>
    <property type="molecule type" value="mRNA"/>
</dbReference>
<dbReference type="EMBL" id="AF537116">
    <property type="protein sequence ID" value="AAQ10786.1"/>
    <property type="molecule type" value="mRNA"/>
</dbReference>
<dbReference type="EMBL" id="AF537117">
    <property type="protein sequence ID" value="AAQ10787.1"/>
    <property type="molecule type" value="mRNA"/>
</dbReference>
<dbReference type="EMBL" id="AF537118">
    <property type="protein sequence ID" value="AAQ10788.1"/>
    <property type="molecule type" value="mRNA"/>
</dbReference>
<dbReference type="EMBL" id="AF537119">
    <property type="protein sequence ID" value="AAQ10789.1"/>
    <property type="molecule type" value="mRNA"/>
</dbReference>
<dbReference type="EMBL" id="AF537120">
    <property type="protein sequence ID" value="AAQ10790.1"/>
    <property type="molecule type" value="mRNA"/>
</dbReference>
<dbReference type="EMBL" id="AF537121">
    <property type="protein sequence ID" value="AAQ10791.1"/>
    <property type="molecule type" value="mRNA"/>
</dbReference>
<dbReference type="EMBL" id="AY358679">
    <property type="protein sequence ID" value="AAQ89042.1"/>
    <property type="molecule type" value="mRNA"/>
</dbReference>
<dbReference type="EMBL" id="CR457193">
    <property type="protein sequence ID" value="CAG33474.1"/>
    <property type="molecule type" value="mRNA"/>
</dbReference>
<dbReference type="EMBL" id="BC032145">
    <property type="protein sequence ID" value="AAH32145.1"/>
    <property type="molecule type" value="mRNA"/>
</dbReference>
<dbReference type="CCDS" id="CCDS53803.1">
    <molecule id="Q9UHF0-3"/>
</dbReference>
<dbReference type="CCDS" id="CCDS8928.1">
    <molecule id="Q9UHF0-1"/>
</dbReference>
<dbReference type="RefSeq" id="NP_001171525.1">
    <molecule id="Q9UHF0-3"/>
    <property type="nucleotide sequence ID" value="NM_001178054.2"/>
</dbReference>
<dbReference type="RefSeq" id="NP_037383.1">
    <molecule id="Q9UHF0-1"/>
    <property type="nucleotide sequence ID" value="NM_013251.4"/>
</dbReference>
<dbReference type="PDB" id="1P9F">
    <property type="method" value="NMR"/>
    <property type="chains" value="A=81-90"/>
</dbReference>
<dbReference type="PDB" id="8JBG">
    <property type="method" value="EM"/>
    <property type="resolution" value="2.80 A"/>
    <property type="chains" value="A=81-90"/>
</dbReference>
<dbReference type="PDBsum" id="1P9F"/>
<dbReference type="PDBsum" id="8JBG"/>
<dbReference type="EMDB" id="EMD-36145"/>
<dbReference type="SMR" id="Q9UHF0"/>
<dbReference type="BioGRID" id="112729">
    <property type="interactions" value="16"/>
</dbReference>
<dbReference type="FunCoup" id="Q9UHF0">
    <property type="interactions" value="513"/>
</dbReference>
<dbReference type="IntAct" id="Q9UHF0">
    <property type="interactions" value="15"/>
</dbReference>
<dbReference type="STRING" id="9606.ENSP00000483110"/>
<dbReference type="BindingDB" id="Q9UHF0"/>
<dbReference type="ChEMBL" id="CHEMBL3707470"/>
<dbReference type="DrugBank" id="DB09130">
    <property type="generic name" value="Copper"/>
</dbReference>
<dbReference type="iPTMnet" id="Q9UHF0"/>
<dbReference type="PhosphoSitePlus" id="Q9UHF0"/>
<dbReference type="BioMuta" id="TAC3"/>
<dbReference type="DMDM" id="18203501"/>
<dbReference type="jPOST" id="Q9UHF0"/>
<dbReference type="MassIVE" id="Q9UHF0"/>
<dbReference type="PaxDb" id="9606-ENSP00000483110"/>
<dbReference type="PeptideAtlas" id="Q9UHF0"/>
<dbReference type="ProteomicsDB" id="84336">
    <molecule id="Q9UHF0-1"/>
</dbReference>
<dbReference type="ProteomicsDB" id="84337">
    <molecule id="Q9UHF0-2"/>
</dbReference>
<dbReference type="ProteomicsDB" id="84338">
    <molecule id="Q9UHF0-3"/>
</dbReference>
<dbReference type="Antibodypedia" id="28422">
    <property type="antibodies" value="277 antibodies from 28 providers"/>
</dbReference>
<dbReference type="DNASU" id="6866"/>
<dbReference type="Ensembl" id="ENST00000300108.7">
    <molecule id="Q9UHF0-1"/>
    <property type="protein sequence ID" value="ENSP00000300108.3"/>
    <property type="gene ID" value="ENSG00000166863.13"/>
</dbReference>
<dbReference type="Ensembl" id="ENST00000357616.7">
    <molecule id="Q9UHF0-2"/>
    <property type="protein sequence ID" value="ENSP00000350236.3"/>
    <property type="gene ID" value="ENSG00000166863.13"/>
</dbReference>
<dbReference type="Ensembl" id="ENST00000379411.6">
    <molecule id="Q9UHF0-3"/>
    <property type="protein sequence ID" value="ENSP00000368721.2"/>
    <property type="gene ID" value="ENSG00000166863.13"/>
</dbReference>
<dbReference type="Ensembl" id="ENST00000393867.5">
    <molecule id="Q9UHF0-2"/>
    <property type="protein sequence ID" value="ENSP00000377445.1"/>
    <property type="gene ID" value="ENSG00000166863.13"/>
</dbReference>
<dbReference type="Ensembl" id="ENST00000415231.1">
    <molecule id="Q9UHF0-1"/>
    <property type="protein sequence ID" value="ENSP00000402995.1"/>
    <property type="gene ID" value="ENSG00000166863.13"/>
</dbReference>
<dbReference type="Ensembl" id="ENST00000423597.5">
    <molecule id="Q9UHF0-3"/>
    <property type="protein sequence ID" value="ENSP00000416292.1"/>
    <property type="gene ID" value="ENSG00000166863.13"/>
</dbReference>
<dbReference type="Ensembl" id="ENST00000438756.5">
    <molecule id="Q9UHF0-2"/>
    <property type="protein sequence ID" value="ENSP00000408131.1"/>
    <property type="gene ID" value="ENSG00000166863.13"/>
</dbReference>
<dbReference type="Ensembl" id="ENST00000441881.5">
    <molecule id="Q9UHF0-3"/>
    <property type="protein sequence ID" value="ENSP00000408208.1"/>
    <property type="gene ID" value="ENSG00000166863.13"/>
</dbReference>
<dbReference type="Ensembl" id="ENST00000458521.7">
    <molecule id="Q9UHF0-1"/>
    <property type="protein sequence ID" value="ENSP00000404056.2"/>
    <property type="gene ID" value="ENSG00000166863.13"/>
</dbReference>
<dbReference type="GeneID" id="6866"/>
<dbReference type="KEGG" id="hsa:6866"/>
<dbReference type="MANE-Select" id="ENST00000458521.7">
    <property type="protein sequence ID" value="ENSP00000404056.2"/>
    <property type="RefSeq nucleotide sequence ID" value="NM_013251.4"/>
    <property type="RefSeq protein sequence ID" value="NP_037383.1"/>
</dbReference>
<dbReference type="UCSC" id="uc001smo.4">
    <molecule id="Q9UHF0-1"/>
    <property type="organism name" value="human"/>
</dbReference>
<dbReference type="AGR" id="HGNC:11521"/>
<dbReference type="CTD" id="6866"/>
<dbReference type="DisGeNET" id="6866"/>
<dbReference type="GeneCards" id="TAC3"/>
<dbReference type="GeneReviews" id="TAC3"/>
<dbReference type="HGNC" id="HGNC:11521">
    <property type="gene designation" value="TAC3"/>
</dbReference>
<dbReference type="HPA" id="ENSG00000166863">
    <property type="expression patterns" value="Tissue enriched (placenta)"/>
</dbReference>
<dbReference type="MalaCards" id="TAC3"/>
<dbReference type="MIM" id="162330">
    <property type="type" value="gene"/>
</dbReference>
<dbReference type="MIM" id="614839">
    <property type="type" value="phenotype"/>
</dbReference>
<dbReference type="neXtProt" id="NX_Q9UHF0"/>
<dbReference type="OpenTargets" id="ENSG00000166863"/>
<dbReference type="Orphanet" id="432">
    <property type="disease" value="Normosmic congenital hypogonadotropic hypogonadism"/>
</dbReference>
<dbReference type="PharmGKB" id="PA36298"/>
<dbReference type="VEuPathDB" id="HostDB:ENSG00000166863"/>
<dbReference type="eggNOG" id="ENOG502S4B9">
    <property type="taxonomic scope" value="Eukaryota"/>
</dbReference>
<dbReference type="GeneTree" id="ENSGT00390000000335"/>
<dbReference type="HOGENOM" id="CLU_138627_1_0_1"/>
<dbReference type="InParanoid" id="Q9UHF0"/>
<dbReference type="OMA" id="MDFQKRD"/>
<dbReference type="OrthoDB" id="9397481at2759"/>
<dbReference type="PAN-GO" id="Q9UHF0">
    <property type="GO annotations" value="1 GO annotation based on evolutionary models"/>
</dbReference>
<dbReference type="PhylomeDB" id="Q9UHF0"/>
<dbReference type="TreeFam" id="TF337038"/>
<dbReference type="PathwayCommons" id="Q9UHF0"/>
<dbReference type="Reactome" id="R-HSA-380095">
    <property type="pathway name" value="Tachykinin receptors bind tachykinins"/>
</dbReference>
<dbReference type="Reactome" id="R-HSA-416476">
    <property type="pathway name" value="G alpha (q) signalling events"/>
</dbReference>
<dbReference type="SignaLink" id="Q9UHF0"/>
<dbReference type="BioGRID-ORCS" id="6866">
    <property type="hits" value="8 hits in 1150 CRISPR screens"/>
</dbReference>
<dbReference type="ChiTaRS" id="TAC3">
    <property type="organism name" value="human"/>
</dbReference>
<dbReference type="EvolutionaryTrace" id="Q9UHF0"/>
<dbReference type="GeneWiki" id="TAC3"/>
<dbReference type="GenomeRNAi" id="6866"/>
<dbReference type="Pharos" id="Q9UHF0">
    <property type="development level" value="Tchem"/>
</dbReference>
<dbReference type="PRO" id="PR:Q9UHF0"/>
<dbReference type="Proteomes" id="UP000005640">
    <property type="component" value="Chromosome 12"/>
</dbReference>
<dbReference type="RNAct" id="Q9UHF0">
    <property type="molecule type" value="protein"/>
</dbReference>
<dbReference type="Bgee" id="ENSG00000166863">
    <property type="expression patterns" value="Expressed in decidua and 138 other cell types or tissues"/>
</dbReference>
<dbReference type="ExpressionAtlas" id="Q9UHF0">
    <property type="expression patterns" value="baseline and differential"/>
</dbReference>
<dbReference type="GO" id="GO:0005576">
    <property type="term" value="C:extracellular region"/>
    <property type="evidence" value="ECO:0000304"/>
    <property type="project" value="Reactome"/>
</dbReference>
<dbReference type="GO" id="GO:0005615">
    <property type="term" value="C:extracellular space"/>
    <property type="evidence" value="ECO:0000304"/>
    <property type="project" value="ProtInc"/>
</dbReference>
<dbReference type="GO" id="GO:0005102">
    <property type="term" value="F:signaling receptor binding"/>
    <property type="evidence" value="ECO:0000304"/>
    <property type="project" value="ProtInc"/>
</dbReference>
<dbReference type="GO" id="GO:0007565">
    <property type="term" value="P:female pregnancy"/>
    <property type="evidence" value="ECO:0000304"/>
    <property type="project" value="ProtInc"/>
</dbReference>
<dbReference type="GO" id="GO:0007218">
    <property type="term" value="P:neuropeptide signaling pathway"/>
    <property type="evidence" value="ECO:0007669"/>
    <property type="project" value="UniProtKB-KW"/>
</dbReference>
<dbReference type="GO" id="GO:0045777">
    <property type="term" value="P:positive regulation of blood pressure"/>
    <property type="evidence" value="ECO:0000318"/>
    <property type="project" value="GO_Central"/>
</dbReference>
<dbReference type="GO" id="GO:0007217">
    <property type="term" value="P:tachykinin receptor signaling pathway"/>
    <property type="evidence" value="ECO:0000304"/>
    <property type="project" value="ProtInc"/>
</dbReference>
<dbReference type="InterPro" id="IPR003635">
    <property type="entry name" value="Neurokinin-B/TAC3"/>
</dbReference>
<dbReference type="InterPro" id="IPR013055">
    <property type="entry name" value="Tachy_Neuro_lke_CS"/>
</dbReference>
<dbReference type="PANTHER" id="PTHR15536">
    <property type="entry name" value="TACHYKININ-3"/>
    <property type="match status" value="1"/>
</dbReference>
<dbReference type="PANTHER" id="PTHR15536:SF1">
    <property type="entry name" value="TACHYKININ-3"/>
    <property type="match status" value="1"/>
</dbReference>
<dbReference type="Pfam" id="PF03823">
    <property type="entry name" value="Neurokinin_B"/>
    <property type="match status" value="1"/>
</dbReference>
<dbReference type="PIRSF" id="PIRSF001843">
    <property type="entry name" value="Neurokinin"/>
    <property type="match status" value="1"/>
</dbReference>
<dbReference type="PRINTS" id="PR01828">
    <property type="entry name" value="NEUROKININB"/>
</dbReference>
<dbReference type="PROSITE" id="PS00267">
    <property type="entry name" value="TACHYKININ"/>
    <property type="match status" value="1"/>
</dbReference>
<proteinExistence type="evidence at protein level"/>
<reference key="1">
    <citation type="submission" date="1999-09" db="EMBL/GenBank/DDBJ databases">
        <authorList>
            <person name="Sheppard P."/>
            <person name="Jelinek L."/>
            <person name="Whitmore T."/>
            <person name="Blumberg H."/>
            <person name="Lehner J."/>
            <person name="O'Hara P."/>
        </authorList>
    </citation>
    <scope>NUCLEOTIDE SEQUENCE [MRNA] (ISOFORM 1)</scope>
</reference>
<reference key="2">
    <citation type="journal article" date="2000" name="Nature">
        <title>Excessive placental secretion of neurokinin B during the third trimester causes pre-eclampsia.</title>
        <authorList>
            <person name="Page N.M."/>
            <person name="Woods R.J."/>
            <person name="Gardiner S.M."/>
            <person name="Lomthiasong K."/>
            <person name="Gladwell R.T."/>
            <person name="Butlin D.J."/>
            <person name="Manyonda I.T."/>
            <person name="Lowry P.J."/>
        </authorList>
    </citation>
    <scope>NUCLEOTIDE SEQUENCE [MRNA] (ISOFORM 1)</scope>
    <source>
        <tissue>Placenta</tissue>
    </source>
</reference>
<reference key="3">
    <citation type="submission" date="2002-08" db="EMBL/GenBank/DDBJ databases">
        <title>The peripheral expression of neurokinin B, its splice variants and its receptors.</title>
        <authorList>
            <person name="Bell N.J."/>
            <person name="Page N.M."/>
        </authorList>
    </citation>
    <scope>NUCLEOTIDE SEQUENCE [MRNA] (ISOFORMS 1; 2 AND 3)</scope>
</reference>
<reference key="4">
    <citation type="journal article" date="2003" name="Genome Res.">
        <title>The secreted protein discovery initiative (SPDI), a large-scale effort to identify novel human secreted and transmembrane proteins: a bioinformatics assessment.</title>
        <authorList>
            <person name="Clark H.F."/>
            <person name="Gurney A.L."/>
            <person name="Abaya E."/>
            <person name="Baker K."/>
            <person name="Baldwin D.T."/>
            <person name="Brush J."/>
            <person name="Chen J."/>
            <person name="Chow B."/>
            <person name="Chui C."/>
            <person name="Crowley C."/>
            <person name="Currell B."/>
            <person name="Deuel B."/>
            <person name="Dowd P."/>
            <person name="Eaton D."/>
            <person name="Foster J.S."/>
            <person name="Grimaldi C."/>
            <person name="Gu Q."/>
            <person name="Hass P.E."/>
            <person name="Heldens S."/>
            <person name="Huang A."/>
            <person name="Kim H.S."/>
            <person name="Klimowski L."/>
            <person name="Jin Y."/>
            <person name="Johnson S."/>
            <person name="Lee J."/>
            <person name="Lewis L."/>
            <person name="Liao D."/>
            <person name="Mark M.R."/>
            <person name="Robbie E."/>
            <person name="Sanchez C."/>
            <person name="Schoenfeld J."/>
            <person name="Seshagiri S."/>
            <person name="Simmons L."/>
            <person name="Singh J."/>
            <person name="Smith V."/>
            <person name="Stinson J."/>
            <person name="Vagts A."/>
            <person name="Vandlen R.L."/>
            <person name="Watanabe C."/>
            <person name="Wieand D."/>
            <person name="Woods K."/>
            <person name="Xie M.-H."/>
            <person name="Yansura D.G."/>
            <person name="Yi S."/>
            <person name="Yu G."/>
            <person name="Yuan J."/>
            <person name="Zhang M."/>
            <person name="Zhang Z."/>
            <person name="Goddard A.D."/>
            <person name="Wood W.I."/>
            <person name="Godowski P.J."/>
            <person name="Gray A.M."/>
        </authorList>
    </citation>
    <scope>NUCLEOTIDE SEQUENCE [LARGE SCALE MRNA] (ISOFORM 2)</scope>
</reference>
<reference key="5">
    <citation type="submission" date="2004-06" db="EMBL/GenBank/DDBJ databases">
        <title>Cloning of human full open reading frames in Gateway(TM) system entry vector (pDONR201).</title>
        <authorList>
            <person name="Ebert L."/>
            <person name="Schick M."/>
            <person name="Neubert P."/>
            <person name="Schatten R."/>
            <person name="Henze S."/>
            <person name="Korn B."/>
        </authorList>
    </citation>
    <scope>NUCLEOTIDE SEQUENCE [LARGE SCALE MRNA] (ISOFORM 1)</scope>
</reference>
<reference key="6">
    <citation type="journal article" date="2004" name="Genome Res.">
        <title>The status, quality, and expansion of the NIH full-length cDNA project: the Mammalian Gene Collection (MGC).</title>
        <authorList>
            <consortium name="The MGC Project Team"/>
        </authorList>
    </citation>
    <scope>NUCLEOTIDE SEQUENCE [LARGE SCALE MRNA] (ISOFORM 1)</scope>
    <source>
        <tissue>Brain</tissue>
    </source>
</reference>
<reference key="7">
    <citation type="journal article" date="2009" name="Nat. Genet.">
        <title>TAC3 and TACR3 mutations in familial hypogonadotropic hypogonadism reveal a key role for Neurokinin B in the central control of reproduction.</title>
        <authorList>
            <person name="Topaloglu A.K."/>
            <person name="Reimann F."/>
            <person name="Guclu M."/>
            <person name="Yalin A.S."/>
            <person name="Kotan L.D."/>
            <person name="Porter K.M."/>
            <person name="Serin A."/>
            <person name="Mungan N.O."/>
            <person name="Cook J.R."/>
            <person name="Ozbek M.N."/>
            <person name="Imamoglu S."/>
            <person name="Akalin N.S."/>
            <person name="Yuksel B."/>
            <person name="O'Rahilly S."/>
            <person name="Semple R.K."/>
        </authorList>
    </citation>
    <scope>ROLE IN REGULATION OF GONADAL FUNCTION</scope>
    <scope>VARIANT HH10 THR-90</scope>
    <scope>CHARACTERIZATION OF VARIANT HH10 THR-90</scope>
</reference>
<reference key="8">
    <citation type="journal article" date="2013" name="Am. J. Hum. Genet.">
        <title>Mutations in FGF17, IL17RD, DUSP6, SPRY4, and FLRT3 are identified in individuals with congenital hypogonadotropic hypogonadism.</title>
        <authorList>
            <person name="Miraoui H."/>
            <person name="Dwyer A.A."/>
            <person name="Sykiotis G.P."/>
            <person name="Plummer L."/>
            <person name="Chung W."/>
            <person name="Feng B."/>
            <person name="Beenken A."/>
            <person name="Clarke J."/>
            <person name="Pers T.H."/>
            <person name="Dworzynski P."/>
            <person name="Keefe K."/>
            <person name="Niedziela M."/>
            <person name="Raivio T."/>
            <person name="Crowley W.F. Jr."/>
            <person name="Seminara S.B."/>
            <person name="Quinton R."/>
            <person name="Hughes V.A."/>
            <person name="Kumanov P."/>
            <person name="Young J."/>
            <person name="Yialamas M.A."/>
            <person name="Hall J.E."/>
            <person name="Van Vliet G."/>
            <person name="Chanoine J.P."/>
            <person name="Rubenstein J."/>
            <person name="Mohammadi M."/>
            <person name="Tsai P.S."/>
            <person name="Sidis Y."/>
            <person name="Lage K."/>
            <person name="Pitteloud N."/>
        </authorList>
    </citation>
    <scope>VARIANT HH10 SER-80</scope>
</reference>
<protein>
    <recommendedName>
        <fullName>Tachykinin-3</fullName>
    </recommendedName>
    <alternativeName>
        <fullName>ZNEUROK1</fullName>
    </alternativeName>
    <component>
        <recommendedName>
            <fullName>Neurokinin-B</fullName>
            <shortName>NKB</shortName>
        </recommendedName>
        <alternativeName>
            <fullName>Neuromedin-K</fullName>
        </alternativeName>
    </component>
</protein>
<gene>
    <name type="primary">TAC3</name>
    <name type="synonym">NKNB</name>
    <name type="ORF">UNQ585/PRO1155</name>
</gene>
<sequence length="121" mass="13438">MRIMLLFTAILAFSLAQSFGAVCKEPQEEVVPGGGRSKRDPDLYQLLQRLFKSHSSLEGLLKALSQASTDPKESTSPEKRDMHDFFVGLMGKRSVQPDSPTDVNQENVPSFGILKYPPRAE</sequence>
<feature type="signal peptide" evidence="2">
    <location>
        <begin position="1"/>
        <end position="16"/>
    </location>
</feature>
<feature type="propeptide" id="PRO_0000033565" evidence="1">
    <location>
        <begin position="17"/>
        <end position="78"/>
    </location>
</feature>
<feature type="peptide" id="PRO_0000033566" description="Neurokinin-B">
    <location>
        <begin position="81"/>
        <end position="90"/>
    </location>
</feature>
<feature type="propeptide" id="PRO_0000033567" evidence="1">
    <location>
        <begin position="94"/>
        <end position="121"/>
    </location>
</feature>
<feature type="region of interest" description="Disordered" evidence="3">
    <location>
        <begin position="93"/>
        <end position="121"/>
    </location>
</feature>
<feature type="compositionally biased region" description="Polar residues" evidence="3">
    <location>
        <begin position="96"/>
        <end position="108"/>
    </location>
</feature>
<feature type="modified residue" description="Methionine amide" evidence="1">
    <location>
        <position position="90"/>
    </location>
</feature>
<feature type="splice variant" id="VSP_013186" description="In isoform 3." evidence="7">
    <original>RDMHDFFVGLMGKRSVQPD</original>
    <variation>H</variation>
    <location>
        <begin position="80"/>
        <end position="98"/>
    </location>
</feature>
<feature type="splice variant" id="VSP_013187" description="In isoform 2." evidence="6 7">
    <original>DSPTDVNQENVPSFGILKYPPRAE</original>
    <variation>EGKTGPFLPSVRVPRPLHPNQLGSTGKSSLGTEEQRPL</variation>
    <location>
        <begin position="98"/>
        <end position="121"/>
    </location>
</feature>
<feature type="sequence variant" id="VAR_069969" description="In HH10; phenotype consistent with normosmic idiopathic hypogonadotropic hypogonadism; the patient also carries a mutation in HS6ST1; dbSNP:rs727505372." evidence="5">
    <original>R</original>
    <variation>S</variation>
    <location>
        <position position="80"/>
    </location>
</feature>
<feature type="sequence variant" id="VAR_069176" description="In HH10; has markedly reduced activity; dbSNP:rs121918123." evidence="4">
    <original>M</original>
    <variation>T</variation>
    <location>
        <position position="90"/>
    </location>
</feature>
<feature type="sequence conflict" description="In Ref. 5; CAG33474." evidence="8" ref="5">
    <original>E</original>
    <variation>D</variation>
    <location>
        <position position="121"/>
    </location>
</feature>
<feature type="helix" evidence="9">
    <location>
        <begin position="82"/>
        <end position="89"/>
    </location>
</feature>
<accession>Q9UHF0</accession>
<accession>Q6IAG2</accession>
<accession>Q71BC6</accession>
<accession>Q71BC9</accession>
<keyword id="KW-0002">3D-structure</keyword>
<keyword id="KW-0025">Alternative splicing</keyword>
<keyword id="KW-0027">Amidation</keyword>
<keyword id="KW-0165">Cleavage on pair of basic residues</keyword>
<keyword id="KW-0225">Disease variant</keyword>
<keyword id="KW-1016">Hypogonadotropic hypogonadism</keyword>
<keyword id="KW-0527">Neuropeptide</keyword>
<keyword id="KW-1267">Proteomics identification</keyword>
<keyword id="KW-1185">Reference proteome</keyword>
<keyword id="KW-0964">Secreted</keyword>
<keyword id="KW-0732">Signal</keyword>
<evidence type="ECO:0000250" key="1"/>
<evidence type="ECO:0000255" key="2"/>
<evidence type="ECO:0000256" key="3">
    <source>
        <dbReference type="SAM" id="MobiDB-lite"/>
    </source>
</evidence>
<evidence type="ECO:0000269" key="4">
    <source>
    </source>
</evidence>
<evidence type="ECO:0000269" key="5">
    <source>
    </source>
</evidence>
<evidence type="ECO:0000303" key="6">
    <source>
    </source>
</evidence>
<evidence type="ECO:0000303" key="7">
    <source ref="3"/>
</evidence>
<evidence type="ECO:0000305" key="8"/>
<evidence type="ECO:0007829" key="9">
    <source>
        <dbReference type="PDB" id="1P9F"/>
    </source>
</evidence>
<comment type="function">
    <text evidence="1 4">Tachykinins are active peptides which excite neurons, evoke behavioral responses, are potent vasodilators and secretagogues, and contract (directly or indirectly) many smooth muscles (By similarity). Is a critical central regulator of gonadal function.</text>
</comment>
<comment type="interaction">
    <interactant intactId="EBI-717325">
        <id>Q9UHF0</id>
    </interactant>
    <interactant intactId="EBI-1055254">
        <id>Q8WXH2</id>
        <label>JPH3</label>
    </interactant>
    <organismsDiffer>false</organismsDiffer>
    <experiments>3</experiments>
</comment>
<comment type="interaction">
    <interactant intactId="EBI-717325">
        <id>Q9UHF0</id>
    </interactant>
    <interactant intactId="EBI-10173935">
        <id>A5D903</id>
        <label>PRB1</label>
    </interactant>
    <organismsDiffer>false</organismsDiffer>
    <experiments>3</experiments>
</comment>
<comment type="interaction">
    <interactant intactId="EBI-717325">
        <id>Q9UHF0</id>
    </interactant>
    <interactant intactId="EBI-13387614">
        <id>A0A087WZY1</id>
    </interactant>
    <organismsDiffer>false</organismsDiffer>
    <experiments>3</experiments>
</comment>
<comment type="interaction">
    <interactant intactId="EBI-6655626">
        <id>PRO_0000033566</id>
    </interactant>
    <interactant intactId="EBI-6655576">
        <id>P29371</id>
        <label>TACR3</label>
    </interactant>
    <organismsDiffer>false</organismsDiffer>
    <experiments>2</experiments>
</comment>
<comment type="subcellular location">
    <subcellularLocation>
        <location>Secreted</location>
    </subcellularLocation>
</comment>
<comment type="alternative products">
    <event type="alternative splicing"/>
    <isoform>
        <id>Q9UHF0-1</id>
        <name>1</name>
        <name>Beta tachykinin 3</name>
        <sequence type="displayed"/>
    </isoform>
    <isoform>
        <id>Q9UHF0-2</id>
        <name>2</name>
        <name>Alpha tachykinin 3</name>
        <sequence type="described" ref="VSP_013187"/>
    </isoform>
    <isoform>
        <id>Q9UHF0-3</id>
        <name>3</name>
        <name>Gamma tachykinin 3</name>
        <sequence type="described" ref="VSP_013186"/>
    </isoform>
</comment>
<comment type="developmental stage">
    <text>In pregnancy, the expression of NKB is confined to the outer syncytiotrophoblast of the placenta, significant concentrations of NKB can be detected in plasma as early as week 9, and plasma concentrations of NKB are grossly elevated in pregnancy-induced hypertension and pre-eclampsia.</text>
</comment>
<comment type="disease" evidence="4 5">
    <disease id="DI-03570">
        <name>Hypogonadotropic hypogonadism 10 with or without anosmia</name>
        <acronym>HH10</acronym>
        <description>A disorder characterized by absent or incomplete sexual maturation by the age of 18 years, in conjunction with low levels of circulating gonadotropins and testosterone and no other abnormalities of the hypothalamic-pituitary axis. In some cases, it is associated with non-reproductive phenotypes, such as anosmia, cleft palate, and sensorineural hearing loss. Anosmia or hyposmia is related to the absence or hypoplasia of the olfactory bulbs and tracts. Hypogonadism is due to deficiency in gonadotropin-releasing hormone and probably results from a failure of embryonic migration of gonadotropin-releasing hormone-synthesizing neurons. In the presence of anosmia, idiopathic hypogonadotropic hypogonadism is referred to as Kallmann syndrome, whereas in the presence of a normal sense of smell, it has been termed normosmic idiopathic hypogonadotropic hypogonadism (nIHH).</description>
        <dbReference type="MIM" id="614839"/>
    </disease>
    <text>The disease is caused by variants affecting the gene represented in this entry.</text>
</comment>
<comment type="similarity">
    <text evidence="8">Belongs to the tachykinin family.</text>
</comment>